<comment type="function">
    <text evidence="2">GTP hydrolase that promotes the GTP-dependent binding of aminoacyl-tRNA to the A-site of ribosomes during protein biosynthesis.</text>
</comment>
<comment type="catalytic activity">
    <reaction evidence="2">
        <text>GTP + H2O = GDP + phosphate + H(+)</text>
        <dbReference type="Rhea" id="RHEA:19669"/>
        <dbReference type="ChEBI" id="CHEBI:15377"/>
        <dbReference type="ChEBI" id="CHEBI:15378"/>
        <dbReference type="ChEBI" id="CHEBI:37565"/>
        <dbReference type="ChEBI" id="CHEBI:43474"/>
        <dbReference type="ChEBI" id="CHEBI:58189"/>
        <dbReference type="EC" id="3.6.5.3"/>
    </reaction>
    <physiologicalReaction direction="left-to-right" evidence="2">
        <dbReference type="Rhea" id="RHEA:19670"/>
    </physiologicalReaction>
</comment>
<comment type="subunit">
    <text evidence="2">Monomer.</text>
</comment>
<comment type="subcellular location">
    <subcellularLocation>
        <location evidence="2">Cytoplasm</location>
    </subcellularLocation>
</comment>
<comment type="similarity">
    <text evidence="2">Belongs to the TRAFAC class translation factor GTPase superfamily. Classic translation factor GTPase family. EF-Tu/EF-1A subfamily.</text>
</comment>
<accession>A0LIH6</accession>
<keyword id="KW-0963">Cytoplasm</keyword>
<keyword id="KW-0251">Elongation factor</keyword>
<keyword id="KW-0342">GTP-binding</keyword>
<keyword id="KW-0378">Hydrolase</keyword>
<keyword id="KW-0460">Magnesium</keyword>
<keyword id="KW-0479">Metal-binding</keyword>
<keyword id="KW-0547">Nucleotide-binding</keyword>
<keyword id="KW-0648">Protein biosynthesis</keyword>
<keyword id="KW-1185">Reference proteome</keyword>
<feature type="chain" id="PRO_0000337559" description="Elongation factor Tu">
    <location>
        <begin position="1"/>
        <end position="397"/>
    </location>
</feature>
<feature type="domain" description="tr-type G">
    <location>
        <begin position="10"/>
        <end position="207"/>
    </location>
</feature>
<feature type="region of interest" description="G1" evidence="1">
    <location>
        <begin position="19"/>
        <end position="26"/>
    </location>
</feature>
<feature type="region of interest" description="G2" evidence="1">
    <location>
        <begin position="60"/>
        <end position="64"/>
    </location>
</feature>
<feature type="region of interest" description="G3" evidence="1">
    <location>
        <begin position="81"/>
        <end position="84"/>
    </location>
</feature>
<feature type="region of interest" description="G4" evidence="1">
    <location>
        <begin position="136"/>
        <end position="139"/>
    </location>
</feature>
<feature type="region of interest" description="G5" evidence="1">
    <location>
        <begin position="174"/>
        <end position="176"/>
    </location>
</feature>
<feature type="binding site" evidence="2">
    <location>
        <begin position="19"/>
        <end position="26"/>
    </location>
    <ligand>
        <name>GTP</name>
        <dbReference type="ChEBI" id="CHEBI:37565"/>
    </ligand>
</feature>
<feature type="binding site" evidence="2">
    <location>
        <position position="26"/>
    </location>
    <ligand>
        <name>Mg(2+)</name>
        <dbReference type="ChEBI" id="CHEBI:18420"/>
    </ligand>
</feature>
<feature type="binding site" evidence="2">
    <location>
        <begin position="81"/>
        <end position="85"/>
    </location>
    <ligand>
        <name>GTP</name>
        <dbReference type="ChEBI" id="CHEBI:37565"/>
    </ligand>
</feature>
<feature type="binding site" evidence="2">
    <location>
        <begin position="136"/>
        <end position="139"/>
    </location>
    <ligand>
        <name>GTP</name>
        <dbReference type="ChEBI" id="CHEBI:37565"/>
    </ligand>
</feature>
<dbReference type="EC" id="3.6.5.3" evidence="2"/>
<dbReference type="EMBL" id="CP000478">
    <property type="protein sequence ID" value="ABK17228.1"/>
    <property type="molecule type" value="Genomic_DNA"/>
</dbReference>
<dbReference type="EMBL" id="CP000478">
    <property type="protein sequence ID" value="ABK17240.1"/>
    <property type="molecule type" value="Genomic_DNA"/>
</dbReference>
<dbReference type="RefSeq" id="WP_011698399.1">
    <property type="nucleotide sequence ID" value="NC_008554.1"/>
</dbReference>
<dbReference type="SMR" id="A0LIH6"/>
<dbReference type="FunCoup" id="A0LIH6">
    <property type="interactions" value="641"/>
</dbReference>
<dbReference type="STRING" id="335543.Sfum_1541"/>
<dbReference type="KEGG" id="sfu:Sfum_1541"/>
<dbReference type="KEGG" id="sfu:Sfum_1553"/>
<dbReference type="eggNOG" id="COG0050">
    <property type="taxonomic scope" value="Bacteria"/>
</dbReference>
<dbReference type="HOGENOM" id="CLU_007265_0_1_7"/>
<dbReference type="InParanoid" id="A0LIH6"/>
<dbReference type="OrthoDB" id="9803139at2"/>
<dbReference type="Proteomes" id="UP000001784">
    <property type="component" value="Chromosome"/>
</dbReference>
<dbReference type="GO" id="GO:0005829">
    <property type="term" value="C:cytosol"/>
    <property type="evidence" value="ECO:0007669"/>
    <property type="project" value="TreeGrafter"/>
</dbReference>
<dbReference type="GO" id="GO:0005525">
    <property type="term" value="F:GTP binding"/>
    <property type="evidence" value="ECO:0007669"/>
    <property type="project" value="UniProtKB-UniRule"/>
</dbReference>
<dbReference type="GO" id="GO:0003924">
    <property type="term" value="F:GTPase activity"/>
    <property type="evidence" value="ECO:0007669"/>
    <property type="project" value="InterPro"/>
</dbReference>
<dbReference type="GO" id="GO:0003746">
    <property type="term" value="F:translation elongation factor activity"/>
    <property type="evidence" value="ECO:0007669"/>
    <property type="project" value="UniProtKB-UniRule"/>
</dbReference>
<dbReference type="CDD" id="cd01884">
    <property type="entry name" value="EF_Tu"/>
    <property type="match status" value="1"/>
</dbReference>
<dbReference type="CDD" id="cd03697">
    <property type="entry name" value="EFTU_II"/>
    <property type="match status" value="1"/>
</dbReference>
<dbReference type="CDD" id="cd03707">
    <property type="entry name" value="EFTU_III"/>
    <property type="match status" value="1"/>
</dbReference>
<dbReference type="FunFam" id="2.40.30.10:FF:000001">
    <property type="entry name" value="Elongation factor Tu"/>
    <property type="match status" value="1"/>
</dbReference>
<dbReference type="FunFam" id="3.40.50.300:FF:000003">
    <property type="entry name" value="Elongation factor Tu"/>
    <property type="match status" value="1"/>
</dbReference>
<dbReference type="Gene3D" id="3.40.50.300">
    <property type="entry name" value="P-loop containing nucleotide triphosphate hydrolases"/>
    <property type="match status" value="1"/>
</dbReference>
<dbReference type="Gene3D" id="2.40.30.10">
    <property type="entry name" value="Translation factors"/>
    <property type="match status" value="2"/>
</dbReference>
<dbReference type="HAMAP" id="MF_00118_B">
    <property type="entry name" value="EF_Tu_B"/>
    <property type="match status" value="1"/>
</dbReference>
<dbReference type="InterPro" id="IPR041709">
    <property type="entry name" value="EF-Tu_GTP-bd"/>
</dbReference>
<dbReference type="InterPro" id="IPR050055">
    <property type="entry name" value="EF-Tu_GTPase"/>
</dbReference>
<dbReference type="InterPro" id="IPR004161">
    <property type="entry name" value="EFTu-like_2"/>
</dbReference>
<dbReference type="InterPro" id="IPR033720">
    <property type="entry name" value="EFTU_2"/>
</dbReference>
<dbReference type="InterPro" id="IPR031157">
    <property type="entry name" value="G_TR_CS"/>
</dbReference>
<dbReference type="InterPro" id="IPR027417">
    <property type="entry name" value="P-loop_NTPase"/>
</dbReference>
<dbReference type="InterPro" id="IPR005225">
    <property type="entry name" value="Small_GTP-bd"/>
</dbReference>
<dbReference type="InterPro" id="IPR000795">
    <property type="entry name" value="T_Tr_GTP-bd_dom"/>
</dbReference>
<dbReference type="InterPro" id="IPR009000">
    <property type="entry name" value="Transl_B-barrel_sf"/>
</dbReference>
<dbReference type="InterPro" id="IPR009001">
    <property type="entry name" value="Transl_elong_EF1A/Init_IF2_C"/>
</dbReference>
<dbReference type="InterPro" id="IPR004541">
    <property type="entry name" value="Transl_elong_EFTu/EF1A_bac/org"/>
</dbReference>
<dbReference type="InterPro" id="IPR004160">
    <property type="entry name" value="Transl_elong_EFTu/EF1A_C"/>
</dbReference>
<dbReference type="NCBIfam" id="TIGR00485">
    <property type="entry name" value="EF-Tu"/>
    <property type="match status" value="1"/>
</dbReference>
<dbReference type="NCBIfam" id="NF000766">
    <property type="entry name" value="PRK00049.1"/>
    <property type="match status" value="1"/>
</dbReference>
<dbReference type="NCBIfam" id="NF009372">
    <property type="entry name" value="PRK12735.1"/>
    <property type="match status" value="1"/>
</dbReference>
<dbReference type="NCBIfam" id="NF009373">
    <property type="entry name" value="PRK12736.1"/>
    <property type="match status" value="1"/>
</dbReference>
<dbReference type="NCBIfam" id="TIGR00231">
    <property type="entry name" value="small_GTP"/>
    <property type="match status" value="1"/>
</dbReference>
<dbReference type="PANTHER" id="PTHR43721:SF22">
    <property type="entry name" value="ELONGATION FACTOR TU, MITOCHONDRIAL"/>
    <property type="match status" value="1"/>
</dbReference>
<dbReference type="PANTHER" id="PTHR43721">
    <property type="entry name" value="ELONGATION FACTOR TU-RELATED"/>
    <property type="match status" value="1"/>
</dbReference>
<dbReference type="Pfam" id="PF00009">
    <property type="entry name" value="GTP_EFTU"/>
    <property type="match status" value="1"/>
</dbReference>
<dbReference type="Pfam" id="PF03144">
    <property type="entry name" value="GTP_EFTU_D2"/>
    <property type="match status" value="1"/>
</dbReference>
<dbReference type="Pfam" id="PF03143">
    <property type="entry name" value="GTP_EFTU_D3"/>
    <property type="match status" value="1"/>
</dbReference>
<dbReference type="PRINTS" id="PR00315">
    <property type="entry name" value="ELONGATNFCT"/>
</dbReference>
<dbReference type="SUPFAM" id="SSF50465">
    <property type="entry name" value="EF-Tu/eEF-1alpha/eIF2-gamma C-terminal domain"/>
    <property type="match status" value="1"/>
</dbReference>
<dbReference type="SUPFAM" id="SSF52540">
    <property type="entry name" value="P-loop containing nucleoside triphosphate hydrolases"/>
    <property type="match status" value="1"/>
</dbReference>
<dbReference type="SUPFAM" id="SSF50447">
    <property type="entry name" value="Translation proteins"/>
    <property type="match status" value="1"/>
</dbReference>
<dbReference type="PROSITE" id="PS00301">
    <property type="entry name" value="G_TR_1"/>
    <property type="match status" value="1"/>
</dbReference>
<dbReference type="PROSITE" id="PS51722">
    <property type="entry name" value="G_TR_2"/>
    <property type="match status" value="1"/>
</dbReference>
<protein>
    <recommendedName>
        <fullName evidence="2">Elongation factor Tu</fullName>
        <shortName evidence="2">EF-Tu</shortName>
        <ecNumber evidence="2">3.6.5.3</ecNumber>
    </recommendedName>
</protein>
<proteinExistence type="inferred from homology"/>
<gene>
    <name evidence="2" type="primary">tuf1</name>
    <name type="ordered locus">Sfum_1541</name>
</gene>
<gene>
    <name evidence="2" type="primary">tuf2</name>
    <name type="ordered locus">Sfum_1553</name>
</gene>
<evidence type="ECO:0000250" key="1"/>
<evidence type="ECO:0000255" key="2">
    <source>
        <dbReference type="HAMAP-Rule" id="MF_00118"/>
    </source>
</evidence>
<organism>
    <name type="scientific">Syntrophobacter fumaroxidans (strain DSM 10017 / MPOB)</name>
    <dbReference type="NCBI Taxonomy" id="335543"/>
    <lineage>
        <taxon>Bacteria</taxon>
        <taxon>Pseudomonadati</taxon>
        <taxon>Thermodesulfobacteriota</taxon>
        <taxon>Syntrophobacteria</taxon>
        <taxon>Syntrophobacterales</taxon>
        <taxon>Syntrophobacteraceae</taxon>
        <taxon>Syntrophobacter</taxon>
    </lineage>
</organism>
<reference key="1">
    <citation type="submission" date="2006-10" db="EMBL/GenBank/DDBJ databases">
        <title>Complete sequence of Syntrophobacter fumaroxidans MPOB.</title>
        <authorList>
            <consortium name="US DOE Joint Genome Institute"/>
            <person name="Copeland A."/>
            <person name="Lucas S."/>
            <person name="Lapidus A."/>
            <person name="Barry K."/>
            <person name="Detter J.C."/>
            <person name="Glavina del Rio T."/>
            <person name="Hammon N."/>
            <person name="Israni S."/>
            <person name="Pitluck S."/>
            <person name="Goltsman E.G."/>
            <person name="Martinez M."/>
            <person name="Schmutz J."/>
            <person name="Larimer F."/>
            <person name="Land M."/>
            <person name="Hauser L."/>
            <person name="Kyrpides N."/>
            <person name="Kim E."/>
            <person name="Boone D.R."/>
            <person name="Brockman F."/>
            <person name="Culley D."/>
            <person name="Ferry J."/>
            <person name="Gunsalus R."/>
            <person name="McInerney M.J."/>
            <person name="Morrison M."/>
            <person name="Plugge C."/>
            <person name="Rohlin L."/>
            <person name="Scholten J."/>
            <person name="Sieber J."/>
            <person name="Stams A.J.M."/>
            <person name="Worm P."/>
            <person name="Henstra A.M."/>
            <person name="Richardson P."/>
        </authorList>
    </citation>
    <scope>NUCLEOTIDE SEQUENCE [LARGE SCALE GENOMIC DNA]</scope>
    <source>
        <strain>DSM 10017 / MPOB</strain>
    </source>
</reference>
<name>EFTU_SYNFM</name>
<sequence length="397" mass="44025">MGKKKFERTKPHVNVGTVGHIDHGKTTLTAAITKQLAKRGRAEFVPFDQIDKAPEERERGITIATAHVEYETDKRHYAHVDCPGHADYIKNMITGAAQMDGAILVVAADDGPMPQTREHILLSRQVGVPYIVVFLNKVDMVDDPELIELVELELRELLSKYGFPGDDVPIIKGSALRALEADDPEHPDTKCIFELMEAIDAYVPDPVRDIDKPFLMPIEDVFSISGRGTVVTGRVERGVIRVSEDVEIVGFRPTFKTVCTGVEMFRKTLDQGQAGDNVGVLLRGTKRDEVERGQVVAKPGSITPHTKFKAEVYVLKKEEGGRHTPFFPGYRPQFYFRTTDVTGIMTLPEGVEMVMPGDNISTEVHLITPVALEKELRFAIREGGRTVGAGVITEIIE</sequence>